<accession>Q01728</accession>
<accession>Q924Y2</accession>
<accession>Q9QW49</accession>
<accession>Q9R238</accession>
<accession>Q9R239</accession>
<accession>Q9WU29</accession>
<accession>Q9WU30</accession>
<reference key="1">
    <citation type="journal article" date="1993" name="FEBS Lett.">
        <title>Cloning of the rat heart Na(+)-Ca2+ exchanger and its functional expression in HeLa cells.</title>
        <authorList>
            <person name="Low W."/>
            <person name="Kasir J."/>
            <person name="Rahamimoff H."/>
        </authorList>
    </citation>
    <scope>NUCLEOTIDE SEQUENCE [MRNA] (ISOFORM 1)</scope>
    <scope>FUNCTION</scope>
    <scope>TRANSPORTER ACTIVITY</scope>
    <scope>SUBCELLULAR LOCATION</scope>
    <source>
        <tissue>Heart</tissue>
    </source>
</reference>
<reference key="2">
    <citation type="journal article" date="1993" name="FEBS Lett.">
        <title>Cloning of two isoforms of the rat brain Na(+)-Ca2+ exchanger gene and their functional expression in HeLa cells.</title>
        <authorList>
            <person name="Furman I."/>
            <person name="Cook O."/>
            <person name="Kasir J."/>
            <person name="Rahamimoff H."/>
        </authorList>
    </citation>
    <scope>NUCLEOTIDE SEQUENCE [MRNA] (ISOFORMS 2 AND 3)</scope>
    <scope>FUNCTION</scope>
    <scope>TRANSPORTER ACTIVITY</scope>
    <scope>SUBCELLULAR LOCATION</scope>
    <scope>ALTERNATIVE SPLICING</scope>
    <source>
        <tissue>Brain</tissue>
    </source>
</reference>
<reference key="3">
    <citation type="journal article" date="1993" name="J. Biochem.">
        <title>Cloning of the rat aortic smooth muscle Na+/Ca2+ exchanger and tissue-specific expression of isoforms.</title>
        <authorList>
            <person name="Nakasaki Y."/>
            <person name="Iwamoto T."/>
            <person name="Hanada H."/>
            <person name="Imagawa T."/>
            <person name="Shigekawa M."/>
        </authorList>
    </citation>
    <scope>NUCLEOTIDE SEQUENCE [MRNA] (ISOFORM 4)</scope>
    <scope>TISSUE SPECIFICITY</scope>
    <source>
        <tissue>Aortic smooth muscle</tissue>
    </source>
</reference>
<reference key="4">
    <citation type="journal article" date="1994" name="J. Biol. Chem.">
        <title>Tissue-specific expression of Na(+)-Ca2+ exchanger isoforms.</title>
        <authorList>
            <person name="Lee S.-L."/>
            <person name="Yu A.S.L."/>
            <person name="Lytton J."/>
        </authorList>
    </citation>
    <scope>NUCLEOTIDE SEQUENCE [MRNA] (ISOFORM 4)</scope>
    <scope>ALTERNATIVE SPLICING</scope>
    <source>
        <strain>Sprague-Dawley</strain>
        <tissue>Kidney cortex</tissue>
    </source>
</reference>
<reference key="5">
    <citation type="journal article" date="2000" name="Am. J. Physiol.">
        <title>Cloning of mesangial cell Na(+)/Ca(2+) exchangers from Dahl/Rapp salt-sensitive/resistant rats.</title>
        <authorList>
            <person name="Unlap M.T."/>
            <person name="Peti-Peterdi J."/>
            <person name="Bell P.D."/>
        </authorList>
    </citation>
    <scope>NUCLEOTIDE SEQUENCE [MRNA] (ISOFORMS 4; 5 AND 7)</scope>
    <scope>FUNCTION</scope>
    <scope>SUBCELLULAR LOCATION</scope>
    <source>
        <strain>Dahl salt-resistant</strain>
        <strain>Dahl salt-sensitive</strain>
        <tissue>Mesangial cell</tissue>
    </source>
</reference>
<reference key="6">
    <citation type="journal article" date="2004" name="J. Cell. Physiol.">
        <title>Regulation of mesangial cell Na+/Ca2+ exchanger isoforms.</title>
        <authorList>
            <person name="Williams I."/>
            <person name="Williams C."/>
            <person name="Siroky B."/>
            <person name="Bates E."/>
            <person name="Kovacs G."/>
            <person name="Peti-Peterdi J."/>
            <person name="Unlap M.T."/>
            <person name="Bell P.D."/>
        </authorList>
    </citation>
    <scope>NUCLEOTIDE SEQUENCE [MRNA] (ISOFORM 6)</scope>
    <scope>FUNCTION</scope>
    <scope>ACTIVITY REGULATION</scope>
    <source>
        <strain>Sprague-Dawley</strain>
        <tissue>Mesangial cell</tissue>
    </source>
</reference>
<reference key="7">
    <citation type="journal article" date="1993" name="Brain Res. Mol. Brain Res.">
        <title>Regional distribution in the rat central nervous system of a mRNA encoding a portion of the cardiac sodium/calcium exchanger isolated from cerebellar granule neurons.</title>
        <authorList>
            <person name="Marlier L.N.J.-L."/>
            <person name="Zheng T."/>
            <person name="Tang J."/>
            <person name="Grayson D.R."/>
        </authorList>
    </citation>
    <scope>NUCLEOTIDE SEQUENCE [MRNA] OF 750-902</scope>
    <scope>TISSUE SPECIFICITY</scope>
    <source>
        <strain>Sprague-Dawley</strain>
        <tissue>Neuron</tissue>
    </source>
</reference>
<reference key="8">
    <citation type="journal article" date="1992" name="Am. J. Physiol.">
        <title>Identification and localization of renal Na(+)-Ca2+ exchanger by polymerase chain reaction.</title>
        <authorList>
            <person name="Yu A.S.L."/>
            <person name="Hebert S.C."/>
            <person name="Lee S.-L."/>
            <person name="Brenner B.M."/>
            <person name="Lytton J."/>
        </authorList>
    </citation>
    <scope>NUCLEOTIDE SEQUENCE [MRNA] OF 780-912</scope>
    <scope>TISSUE SPECIFICITY</scope>
    <source>
        <strain>CD Charles River</strain>
        <tissue>Kidney</tissue>
    </source>
</reference>
<reference key="9">
    <citation type="journal article" date="1996" name="J. Biol. Chem.">
        <title>Cloning of a third mammalian Na+-Ca2+ exchanger, NCX3.</title>
        <authorList>
            <person name="Nicoll D.A."/>
            <person name="Quednau B.D."/>
            <person name="Qui Z."/>
            <person name="Xia Y.-R."/>
            <person name="Lusis A.J."/>
            <person name="Philipson K.D."/>
        </authorList>
    </citation>
    <scope>TISSUE SPECIFICITY</scope>
    <source>
        <strain>Sprague-Dawley</strain>
    </source>
</reference>
<reference key="10">
    <citation type="journal article" date="2002" name="Ann. N. Y. Acad. Sci.">
        <title>Electrophysiological studies of the cloned rat cardiac NCX1.1 in transfected HEK cells: a focus on the stoichiometry.</title>
        <authorList>
            <person name="Dong H."/>
            <person name="Dunn J."/>
            <person name="Lytton J."/>
        </authorList>
    </citation>
    <scope>FUNCTION</scope>
    <scope>SUBCELLULAR LOCATION</scope>
    <scope>ACTIVITY REGULATION</scope>
</reference>
<reference key="11">
    <citation type="journal article" date="2007" name="Cell Calcium">
        <title>Cellular and subcellular localization of Na+-Ca2+ exchanger protein isoforms, NCX1, NCX2, and NCX3 in cerebral cortex and hippocampus of adult rat.</title>
        <authorList>
            <person name="Minelli A."/>
            <person name="Castaldo P."/>
            <person name="Gobbi P."/>
            <person name="Salucci S."/>
            <person name="Magi S."/>
            <person name="Amoroso S."/>
        </authorList>
    </citation>
    <scope>TISSUE SPECIFICITY</scope>
    <scope>SUBCELLULAR LOCATION</scope>
</reference>
<reference key="12">
    <citation type="journal article" date="2013" name="Mol. Aspects Med.">
        <title>The SLC8 gene family of sodium-calcium exchangers (NCX) - structure, function, and regulation in health and disease.</title>
        <authorList>
            <person name="Khananshvili D."/>
        </authorList>
    </citation>
    <scope>REVIEW</scope>
</reference>
<feature type="signal peptide" evidence="3">
    <location>
        <begin position="1"/>
        <end position="32"/>
    </location>
</feature>
<feature type="chain" id="PRO_0000019381" description="Sodium/calcium exchanger 1">
    <location>
        <begin position="33"/>
        <end position="971"/>
    </location>
</feature>
<feature type="topological domain" description="Extracellular" evidence="3">
    <location>
        <begin position="33"/>
        <end position="71"/>
    </location>
</feature>
<feature type="transmembrane region" description="Helical" evidence="3">
    <location>
        <begin position="72"/>
        <end position="92"/>
    </location>
</feature>
<feature type="topological domain" description="Cytoplasmic" evidence="3">
    <location>
        <begin position="93"/>
        <end position="133"/>
    </location>
</feature>
<feature type="transmembrane region" description="Helical" evidence="3">
    <location>
        <begin position="134"/>
        <end position="154"/>
    </location>
</feature>
<feature type="topological domain" description="Extracellular" evidence="3">
    <location>
        <begin position="155"/>
        <end position="167"/>
    </location>
</feature>
<feature type="transmembrane region" description="Helical" evidence="3">
    <location>
        <begin position="168"/>
        <end position="188"/>
    </location>
</feature>
<feature type="topological domain" description="Cytoplasmic" evidence="3">
    <location>
        <begin position="189"/>
        <end position="201"/>
    </location>
</feature>
<feature type="transmembrane region" description="Helical" evidence="3">
    <location>
        <begin position="202"/>
        <end position="222"/>
    </location>
</feature>
<feature type="topological domain" description="Extracellular" evidence="3">
    <location>
        <begin position="223"/>
        <end position="228"/>
    </location>
</feature>
<feature type="transmembrane region" description="Helical" evidence="3">
    <location>
        <begin position="229"/>
        <end position="249"/>
    </location>
</feature>
<feature type="topological domain" description="Cytoplasmic" evidence="3">
    <location>
        <begin position="250"/>
        <end position="798"/>
    </location>
</feature>
<feature type="transmembrane region" description="Helical" evidence="3">
    <location>
        <begin position="799"/>
        <end position="819"/>
    </location>
</feature>
<feature type="topological domain" description="Extracellular" evidence="3">
    <location>
        <begin position="820"/>
        <end position="822"/>
    </location>
</feature>
<feature type="transmembrane region" description="Helical" evidence="3">
    <location>
        <begin position="823"/>
        <end position="843"/>
    </location>
</feature>
<feature type="topological domain" description="Cytoplasmic" evidence="3">
    <location>
        <begin position="844"/>
        <end position="872"/>
    </location>
</feature>
<feature type="transmembrane region" description="Helical" evidence="3">
    <location>
        <begin position="873"/>
        <end position="893"/>
    </location>
</feature>
<feature type="topological domain" description="Extracellular" evidence="3">
    <location>
        <begin position="894"/>
        <end position="904"/>
    </location>
</feature>
<feature type="transmembrane region" description="Helical" evidence="3">
    <location>
        <begin position="905"/>
        <end position="925"/>
    </location>
</feature>
<feature type="topological domain" description="Cytoplasmic" evidence="3">
    <location>
        <begin position="926"/>
        <end position="942"/>
    </location>
</feature>
<feature type="transmembrane region" description="Helical" evidence="3">
    <location>
        <begin position="943"/>
        <end position="963"/>
    </location>
</feature>
<feature type="topological domain" description="Extracellular" evidence="3">
    <location>
        <begin position="964"/>
        <end position="971"/>
    </location>
</feature>
<feature type="repeat" description="Alpha-1">
    <location>
        <begin position="138"/>
        <end position="178"/>
    </location>
</feature>
<feature type="domain" description="Calx-beta 1">
    <location>
        <begin position="393"/>
        <end position="493"/>
    </location>
</feature>
<feature type="domain" description="Calx-beta 2">
    <location>
        <begin position="524"/>
        <end position="624"/>
    </location>
</feature>
<feature type="repeat" description="Alpha-2">
    <location>
        <begin position="840"/>
        <end position="876"/>
    </location>
</feature>
<feature type="region of interest" description="Putative calmodulin-binding region" evidence="1">
    <location>
        <begin position="251"/>
        <end position="270"/>
    </location>
</feature>
<feature type="binding site" evidence="1">
    <location>
        <position position="417"/>
    </location>
    <ligand>
        <name>Ca(2+)</name>
        <dbReference type="ChEBI" id="CHEBI:29108"/>
        <label>1</label>
    </ligand>
</feature>
<feature type="binding site" evidence="1">
    <location>
        <position position="417"/>
    </location>
    <ligand>
        <name>Ca(2+)</name>
        <dbReference type="ChEBI" id="CHEBI:29108"/>
        <label>2</label>
    </ligand>
</feature>
<feature type="binding site" evidence="1">
    <location>
        <position position="417"/>
    </location>
    <ligand>
        <name>Ca(2+)</name>
        <dbReference type="ChEBI" id="CHEBI:29108"/>
        <label>3</label>
    </ligand>
</feature>
<feature type="binding site" evidence="1">
    <location>
        <position position="453"/>
    </location>
    <ligand>
        <name>Ca(2+)</name>
        <dbReference type="ChEBI" id="CHEBI:29108"/>
        <label>1</label>
    </ligand>
</feature>
<feature type="binding site" evidence="1">
    <location>
        <position position="453"/>
    </location>
    <ligand>
        <name>Ca(2+)</name>
        <dbReference type="ChEBI" id="CHEBI:29108"/>
        <label>4</label>
    </ligand>
</feature>
<feature type="binding site" evidence="1">
    <location>
        <position position="478"/>
    </location>
    <ligand>
        <name>Ca(2+)</name>
        <dbReference type="ChEBI" id="CHEBI:29108"/>
        <label>2</label>
    </ligand>
</feature>
<feature type="binding site" evidence="1">
    <location>
        <position position="479"/>
    </location>
    <ligand>
        <name>Ca(2+)</name>
        <dbReference type="ChEBI" id="CHEBI:29108"/>
        <label>1</label>
    </ligand>
</feature>
<feature type="binding site" evidence="1">
    <location>
        <position position="479"/>
    </location>
    <ligand>
        <name>Ca(2+)</name>
        <dbReference type="ChEBI" id="CHEBI:29108"/>
        <label>2</label>
    </ligand>
</feature>
<feature type="binding site" evidence="1">
    <location>
        <position position="479"/>
    </location>
    <ligand>
        <name>Ca(2+)</name>
        <dbReference type="ChEBI" id="CHEBI:29108"/>
        <label>3</label>
    </ligand>
</feature>
<feature type="binding site" evidence="1">
    <location>
        <position position="479"/>
    </location>
    <ligand>
        <name>Ca(2+)</name>
        <dbReference type="ChEBI" id="CHEBI:29108"/>
        <label>4</label>
    </ligand>
</feature>
<feature type="binding site" evidence="1">
    <location>
        <position position="481"/>
    </location>
    <ligand>
        <name>Ca(2+)</name>
        <dbReference type="ChEBI" id="CHEBI:29108"/>
        <label>3</label>
    </ligand>
</feature>
<feature type="binding site" evidence="1">
    <location>
        <position position="483"/>
    </location>
    <ligand>
        <name>Ca(2+)</name>
        <dbReference type="ChEBI" id="CHEBI:29108"/>
        <label>1</label>
    </ligand>
</feature>
<feature type="binding site" evidence="1">
    <location>
        <position position="483"/>
    </location>
    <ligand>
        <name>Ca(2+)</name>
        <dbReference type="ChEBI" id="CHEBI:29108"/>
        <label>3</label>
    </ligand>
</feature>
<feature type="binding site" evidence="1">
    <location>
        <position position="483"/>
    </location>
    <ligand>
        <name>Ca(2+)</name>
        <dbReference type="ChEBI" id="CHEBI:29108"/>
        <label>4</label>
    </ligand>
</feature>
<feature type="binding site" evidence="1">
    <location>
        <position position="486"/>
    </location>
    <ligand>
        <name>Ca(2+)</name>
        <dbReference type="ChEBI" id="CHEBI:29108"/>
        <label>4</label>
    </ligand>
</feature>
<feature type="binding site" evidence="1">
    <location>
        <position position="530"/>
    </location>
    <ligand>
        <name>Ca(2+)</name>
        <dbReference type="ChEBI" id="CHEBI:29108"/>
        <label>3</label>
    </ligand>
</feature>
<feature type="binding site" evidence="1">
    <location>
        <position position="531"/>
    </location>
    <ligand>
        <name>Ca(2+)</name>
        <dbReference type="ChEBI" id="CHEBI:29108"/>
        <label>2</label>
    </ligand>
</feature>
<feature type="binding site" evidence="1">
    <location>
        <position position="532"/>
    </location>
    <ligand>
        <name>Ca(2+)</name>
        <dbReference type="ChEBI" id="CHEBI:29108"/>
        <label>2</label>
    </ligand>
</feature>
<feature type="binding site" evidence="1">
    <location>
        <position position="532"/>
    </location>
    <ligand>
        <name>Ca(2+)</name>
        <dbReference type="ChEBI" id="CHEBI:29108"/>
        <label>3</label>
    </ligand>
</feature>
<feature type="binding site" evidence="1">
    <location>
        <position position="548"/>
    </location>
    <ligand>
        <name>Ca(2+)</name>
        <dbReference type="ChEBI" id="CHEBI:29108"/>
        <label>5</label>
    </ligand>
</feature>
<feature type="binding site" evidence="1">
    <location>
        <position position="584"/>
    </location>
    <ligand>
        <name>Ca(2+)</name>
        <dbReference type="ChEBI" id="CHEBI:29108"/>
        <label>6</label>
    </ligand>
</feature>
<feature type="binding site" evidence="1">
    <location>
        <position position="610"/>
    </location>
    <ligand>
        <name>Ca(2+)</name>
        <dbReference type="ChEBI" id="CHEBI:29108"/>
        <label>5</label>
    </ligand>
</feature>
<feature type="binding site" evidence="1">
    <location>
        <position position="610"/>
    </location>
    <ligand>
        <name>Ca(2+)</name>
        <dbReference type="ChEBI" id="CHEBI:29108"/>
        <label>6</label>
    </ligand>
</feature>
<feature type="binding site" evidence="1">
    <location>
        <position position="611"/>
    </location>
    <ligand>
        <name>Ca(2+)</name>
        <dbReference type="ChEBI" id="CHEBI:29108"/>
        <label>6</label>
    </ligand>
</feature>
<feature type="binding site" evidence="1">
    <location>
        <position position="612"/>
    </location>
    <ligand>
        <name>Ca(2+)</name>
        <dbReference type="ChEBI" id="CHEBI:29108"/>
        <label>5</label>
    </ligand>
</feature>
<feature type="binding site" evidence="1">
    <location>
        <position position="612"/>
    </location>
    <ligand>
        <name>Ca(2+)</name>
        <dbReference type="ChEBI" id="CHEBI:29108"/>
        <label>6</label>
    </ligand>
</feature>
<feature type="binding site" evidence="1">
    <location>
        <position position="716"/>
    </location>
    <ligand>
        <name>Ca(2+)</name>
        <dbReference type="ChEBI" id="CHEBI:29108"/>
        <label>5</label>
    </ligand>
</feature>
<feature type="modified residue" description="Phosphoserine" evidence="2">
    <location>
        <position position="282"/>
    </location>
</feature>
<feature type="modified residue" description="Phosphoserine" evidence="2">
    <location>
        <position position="389"/>
    </location>
</feature>
<feature type="glycosylation site" description="N-linked (GlcNAc...) asparagine" evidence="3">
    <location>
        <position position="41"/>
    </location>
</feature>
<feature type="glycosylation site" description="N-linked (GlcNAc...) asparagine" evidence="3">
    <location>
        <position position="157"/>
    </location>
</feature>
<feature type="splice variant" id="VSP_003401" description="In isoform 4, isoform 5, isoform 6 and isoform 7." evidence="14 15 16 17">
    <original>TISVKVIDDEEYEKNKTFFIEIGEPRLVEMSEKK</original>
    <variation>IITIRIFDREEYEKECSFSLVLEEPKWIRRGMK</variation>
    <location>
        <begin position="602"/>
        <end position="635"/>
    </location>
</feature>
<feature type="splice variant" id="VSP_003402" description="In isoform 2, isoform 3, isoform 4, isoform 5 and isoform 6." evidence="14 15 16 17 18">
    <location>
        <begin position="636"/>
        <end position="642"/>
    </location>
</feature>
<feature type="splice variant" id="VSP_003404" description="In isoform 3 and isoform 5." evidence="14 18">
    <location>
        <begin position="649"/>
        <end position="677"/>
    </location>
</feature>
<feature type="splice variant" id="VSP_003403" description="In isoform 2 and isoform 4." evidence="14 16 17 18">
    <location>
        <begin position="649"/>
        <end position="654"/>
    </location>
</feature>
<feature type="splice variant" id="VSP_029836" description="In isoform 6 and isoform 7." evidence="14 15">
    <location>
        <position position="649"/>
    </location>
</feature>
<feature type="sequence conflict" description="In Ref. 5; AAD23388/AAD23389 and 6; AAK52307." evidence="19" ref="5 6">
    <original>L</original>
    <variation>P</variation>
    <location>
        <position position="148"/>
    </location>
</feature>
<feature type="sequence conflict" description="In Ref. 5; AAD23387." evidence="19" ref="5">
    <original>I</original>
    <variation>F</variation>
    <location>
        <position position="218"/>
    </location>
</feature>
<feature type="sequence conflict" description="In Ref. 1; CAA48273." evidence="19" ref="1">
    <original>D</original>
    <variation>A</variation>
    <location>
        <position position="250"/>
    </location>
</feature>
<feature type="sequence conflict" description="In Ref. 1; CAA48273." evidence="19" ref="1">
    <original>P</original>
    <variation>A</variation>
    <location>
        <position position="402"/>
    </location>
</feature>
<feature type="sequence conflict" description="In Ref. 5; AAD23386/AAD23387." evidence="19" ref="5">
    <original>F</original>
    <variation>S</variation>
    <location>
        <position position="438"/>
    </location>
</feature>
<feature type="sequence conflict" description="In Ref. 5; AAD23388 and 6; AAK52307." evidence="19" ref="5 6">
    <original>E</original>
    <variation>G</variation>
    <location>
        <position position="500"/>
    </location>
</feature>
<feature type="sequence conflict" description="In Ref. 8." evidence="19" ref="8">
    <original>F</original>
    <variation>N</variation>
    <location>
        <position position="789"/>
    </location>
</feature>
<feature type="sequence conflict" description="In Ref. 8." evidence="19" ref="8">
    <original>A</original>
    <variation>R</variation>
    <location>
        <position position="861"/>
    </location>
</feature>
<organism>
    <name type="scientific">Rattus norvegicus</name>
    <name type="common">Rat</name>
    <dbReference type="NCBI Taxonomy" id="10116"/>
    <lineage>
        <taxon>Eukaryota</taxon>
        <taxon>Metazoa</taxon>
        <taxon>Chordata</taxon>
        <taxon>Craniata</taxon>
        <taxon>Vertebrata</taxon>
        <taxon>Euteleostomi</taxon>
        <taxon>Mammalia</taxon>
        <taxon>Eutheria</taxon>
        <taxon>Euarchontoglires</taxon>
        <taxon>Glires</taxon>
        <taxon>Rodentia</taxon>
        <taxon>Myomorpha</taxon>
        <taxon>Muroidea</taxon>
        <taxon>Muridae</taxon>
        <taxon>Murinae</taxon>
        <taxon>Rattus</taxon>
    </lineage>
</organism>
<proteinExistence type="evidence at protein level"/>
<evidence type="ECO:0000250" key="1">
    <source>
        <dbReference type="UniProtKB" id="P23685"/>
    </source>
</evidence>
<evidence type="ECO:0000250" key="2">
    <source>
        <dbReference type="UniProtKB" id="P70414"/>
    </source>
</evidence>
<evidence type="ECO:0000255" key="3"/>
<evidence type="ECO:0000269" key="4">
    <source>
    </source>
</evidence>
<evidence type="ECO:0000269" key="5">
    <source>
    </source>
</evidence>
<evidence type="ECO:0000269" key="6">
    <source>
    </source>
</evidence>
<evidence type="ECO:0000269" key="7">
    <source>
    </source>
</evidence>
<evidence type="ECO:0000269" key="8">
    <source>
    </source>
</evidence>
<evidence type="ECO:0000269" key="9">
    <source>
    </source>
</evidence>
<evidence type="ECO:0000269" key="10">
    <source>
    </source>
</evidence>
<evidence type="ECO:0000269" key="11">
    <source>
    </source>
</evidence>
<evidence type="ECO:0000269" key="12">
    <source>
    </source>
</evidence>
<evidence type="ECO:0000269" key="13">
    <source>
    </source>
</evidence>
<evidence type="ECO:0000303" key="14">
    <source>
    </source>
</evidence>
<evidence type="ECO:0000303" key="15">
    <source>
    </source>
</evidence>
<evidence type="ECO:0000303" key="16">
    <source>
    </source>
</evidence>
<evidence type="ECO:0000303" key="17">
    <source>
    </source>
</evidence>
<evidence type="ECO:0000303" key="18">
    <source>
    </source>
</evidence>
<evidence type="ECO:0000305" key="19"/>
<comment type="function">
    <text evidence="2 4 5 7 11 12">Mediates the exchange of one Ca(2+) ion against three to four Na(+) ions across the cell membrane, and thereby contributes to the regulation of cytoplasmic Ca(2+) levels and Ca(2+)-dependent cellular processes (PubMed:10894800, PubMed:12502557, PubMed:8422940, PubMed:8454039). Contributes to Ca(2+) transport during excitation-contraction coupling in muscle. In a first phase, voltage-gated channels mediate the rapid increase of cytoplasmic Ca(2+) levels due to release of Ca(2+) stores from the endoplasmic reticulum. SLC8A1 mediates the export of Ca(2+) from the cell during the next phase, so that cytoplasmic Ca(2+) levels rapidly return to baseline. Required for normal embryonic heart development and the onset of heart contractions (By similarity).</text>
</comment>
<comment type="catalytic activity">
    <reaction evidence="11 12">
        <text>Ca(2+)(in) + 3 Na(+)(out) = Ca(2+)(out) + 3 Na(+)(in)</text>
        <dbReference type="Rhea" id="RHEA:69955"/>
        <dbReference type="ChEBI" id="CHEBI:29101"/>
        <dbReference type="ChEBI" id="CHEBI:29108"/>
    </reaction>
</comment>
<comment type="activity regulation">
    <text evidence="5">Activated by micromolar levels of Ca(2+) (PubMed:12502557).</text>
</comment>
<comment type="activity regulation">
    <molecule>Isoform 4</molecule>
    <text evidence="7">Only active at low calcium concentrations (PubMed:15040000). Not activated by PKC (PubMed:15040000).</text>
</comment>
<comment type="activity regulation">
    <molecule>Isoform 5</molecule>
    <text evidence="7">Active at all calcium levels tested (PubMed:15040000). Activated by PKC (PubMed:15040000).</text>
</comment>
<comment type="activity regulation">
    <molecule>Isoform 6</molecule>
    <text evidence="7">Only active at low calcium concentrations (PubMed:15040000). Activated by PKC (PubMed:15040000).</text>
</comment>
<comment type="subcellular location">
    <subcellularLocation>
        <location evidence="4 5 8 11">Cell membrane</location>
        <topology evidence="19">Multi-pass membrane protein</topology>
    </subcellularLocation>
    <subcellularLocation>
        <location evidence="8">Cell projection</location>
        <location evidence="8">Dendrite</location>
    </subcellularLocation>
</comment>
<comment type="alternative products">
    <event type="alternative splicing"/>
    <isoform>
        <id>Q01728-1</id>
        <name>1</name>
        <name>Heart</name>
        <name>NaCa1</name>
        <sequence type="displayed"/>
    </isoform>
    <isoform>
        <id>Q01728-2</id>
        <name>2</name>
        <name>Brain-1</name>
        <name>NaCa5</name>
        <sequence type="described" ref="VSP_003402 VSP_003403"/>
    </isoform>
    <isoform>
        <id>Q01728-3</id>
        <name>3</name>
        <name>Brain-2</name>
        <name>NaCa4</name>
        <sequence type="described" ref="VSP_003402 VSP_003404"/>
    </isoform>
    <isoform>
        <id>Q01728-4</id>
        <name>4</name>
        <name>Kidney-1</name>
        <name>NaCa7</name>
        <name>SNCX1</name>
        <sequence type="described" ref="VSP_003401 VSP_003402 VSP_003403"/>
    </isoform>
    <isoform>
        <id>Q01728-5</id>
        <name>5</name>
        <name>Kidney-2</name>
        <name>NaCa3</name>
        <name>RNCX1</name>
        <sequence type="described" ref="VSP_003401 VSP_003402 VSP_003404"/>
    </isoform>
    <isoform>
        <id>Q01728-6</id>
        <name>6</name>
        <name>SDNCX1.10</name>
        <sequence type="described" ref="VSP_003401 VSP_003402 VSP_029836"/>
    </isoform>
    <isoform>
        <id>Q01728-7</id>
        <name>7</name>
        <sequence type="described" ref="VSP_003401 VSP_029836"/>
    </isoform>
</comment>
<comment type="tissue specificity">
    <text evidence="6 8 9 10 13">Detected in heart, brain cortex and hippocampus (at protein level) (PubMed:16914199). Cardiac sarcolemma or brain, and spleen. Expressed in all regions of the kidney, highest levels of expression in the distal convoluted tubule. Expressed throughout the CNS, in decreasing order of abundance in hippocampus, cortex, cerebellum, hypothalamus, midbrain and striatum. Expressed in numerous regions of the brain including multiple cortical layers, hippocampus, septal nuclei, thalamic nuclei, cerebellum, hypothalamus, olfactory bulb and brainstem. Also expressed in various regions of the spinal cord, ventricles and atria of the heart, lung, adrenals and kidney. Isoform 4 seems to be a predominant isoform in aorta, stomach, liver, and kidney.</text>
</comment>
<comment type="domain">
    <text evidence="1">The cytoplasmic Calx-beta domains bind the regulatory Ca(2+). The first Calx-beta domain can bind up to four Ca(2+) ions. The second domain can bind another two Ca(2+) ions that are essential for calcium-regulated ion exchange.</text>
</comment>
<comment type="similarity">
    <text evidence="19">Belongs to the Ca(2+):cation antiporter (CaCA) (TC 2.A.19) family. SLC8 subfamily.</text>
</comment>
<keyword id="KW-0025">Alternative splicing</keyword>
<keyword id="KW-0050">Antiport</keyword>
<keyword id="KW-0106">Calcium</keyword>
<keyword id="KW-0109">Calcium transport</keyword>
<keyword id="KW-0112">Calmodulin-binding</keyword>
<keyword id="KW-1003">Cell membrane</keyword>
<keyword id="KW-0966">Cell projection</keyword>
<keyword id="KW-0325">Glycoprotein</keyword>
<keyword id="KW-0406">Ion transport</keyword>
<keyword id="KW-0472">Membrane</keyword>
<keyword id="KW-0479">Metal-binding</keyword>
<keyword id="KW-0597">Phosphoprotein</keyword>
<keyword id="KW-1185">Reference proteome</keyword>
<keyword id="KW-0677">Repeat</keyword>
<keyword id="KW-0732">Signal</keyword>
<keyword id="KW-0915">Sodium</keyword>
<keyword id="KW-0739">Sodium transport</keyword>
<keyword id="KW-0812">Transmembrane</keyword>
<keyword id="KW-1133">Transmembrane helix</keyword>
<keyword id="KW-0813">Transport</keyword>
<name>NAC1_RAT</name>
<gene>
    <name type="primary">Slc8a1</name>
    <name type="synonym">Ncx1</name>
</gene>
<protein>
    <recommendedName>
        <fullName>Sodium/calcium exchanger 1</fullName>
    </recommendedName>
    <alternativeName>
        <fullName>Na(+)/Ca(2+)-exchange protein 1</fullName>
    </alternativeName>
    <alternativeName>
        <fullName>Solute carrier family 8 member 1</fullName>
    </alternativeName>
</protein>
<dbReference type="EMBL" id="X68191">
    <property type="protein sequence ID" value="CAA48273.1"/>
    <property type="molecule type" value="mRNA"/>
</dbReference>
<dbReference type="EMBL" id="X68812">
    <property type="protein sequence ID" value="CAA48707.1"/>
    <property type="molecule type" value="mRNA"/>
</dbReference>
<dbReference type="EMBL" id="X68813">
    <property type="protein sequence ID" value="CAA48708.1"/>
    <property type="molecule type" value="mRNA"/>
</dbReference>
<dbReference type="EMBL" id="U04933">
    <property type="protein sequence ID" value="AAB39952.1"/>
    <property type="molecule type" value="mRNA"/>
</dbReference>
<dbReference type="EMBL" id="U04934">
    <property type="protein sequence ID" value="AAA19124.1"/>
    <property type="molecule type" value="mRNA"/>
</dbReference>
<dbReference type="EMBL" id="U04936">
    <property type="protein sequence ID" value="AAA19125.1"/>
    <property type="molecule type" value="mRNA"/>
</dbReference>
<dbReference type="EMBL" id="AF109163">
    <property type="protein sequence ID" value="AAD23386.1"/>
    <property type="molecule type" value="mRNA"/>
</dbReference>
<dbReference type="EMBL" id="AF109164">
    <property type="protein sequence ID" value="AAD23387.1"/>
    <property type="molecule type" value="mRNA"/>
</dbReference>
<dbReference type="EMBL" id="AF109165">
    <property type="protein sequence ID" value="AAD23388.1"/>
    <property type="molecule type" value="mRNA"/>
</dbReference>
<dbReference type="EMBL" id="AF109166">
    <property type="protein sequence ID" value="AAD23389.1"/>
    <property type="molecule type" value="mRNA"/>
</dbReference>
<dbReference type="EMBL" id="AY033398">
    <property type="protein sequence ID" value="AAK52307.1"/>
    <property type="molecule type" value="mRNA"/>
</dbReference>
<dbReference type="PIR" id="A53789">
    <property type="entry name" value="A53789"/>
</dbReference>
<dbReference type="PIR" id="I52640">
    <property type="entry name" value="I52640"/>
</dbReference>
<dbReference type="PIR" id="S28833">
    <property type="entry name" value="S28833"/>
</dbReference>
<dbReference type="PIR" id="S32435">
    <property type="entry name" value="S32435"/>
</dbReference>
<dbReference type="PIR" id="S43730">
    <property type="entry name" value="S43730"/>
</dbReference>
<dbReference type="RefSeq" id="NP_001257701.1">
    <molecule id="Q01728-3"/>
    <property type="nucleotide sequence ID" value="NM_001270772.2"/>
</dbReference>
<dbReference type="RefSeq" id="NP_001257702.1">
    <molecule id="Q01728-5"/>
    <property type="nucleotide sequence ID" value="NM_001270773.2"/>
</dbReference>
<dbReference type="RefSeq" id="NP_001257703.1">
    <molecule id="Q01728-2"/>
    <property type="nucleotide sequence ID" value="NM_001270774.2"/>
</dbReference>
<dbReference type="RefSeq" id="NP_001257704.1">
    <molecule id="Q01728-4"/>
    <property type="nucleotide sequence ID" value="NM_001270775.2"/>
</dbReference>
<dbReference type="RefSeq" id="NP_001257705.1">
    <molecule id="Q01728-7"/>
    <property type="nucleotide sequence ID" value="NM_001270776.2"/>
</dbReference>
<dbReference type="RefSeq" id="NP_001257706.1">
    <molecule id="Q01728-6"/>
    <property type="nucleotide sequence ID" value="NM_001270777.2"/>
</dbReference>
<dbReference type="RefSeq" id="XP_008762655.1">
    <property type="nucleotide sequence ID" value="XM_008764433.2"/>
</dbReference>
<dbReference type="RefSeq" id="XP_008762659.1">
    <property type="nucleotide sequence ID" value="XM_008764437.2"/>
</dbReference>
<dbReference type="RefSeq" id="XP_008762660.1">
    <property type="nucleotide sequence ID" value="XM_008764438.2"/>
</dbReference>
<dbReference type="RefSeq" id="XP_008762661.1">
    <property type="nucleotide sequence ID" value="XM_008764439.2"/>
</dbReference>
<dbReference type="RefSeq" id="XP_017449552.1">
    <property type="nucleotide sequence ID" value="XM_017594063.1"/>
</dbReference>
<dbReference type="RefSeq" id="XP_038967808.1">
    <molecule id="Q01728-2"/>
    <property type="nucleotide sequence ID" value="XM_039111880.2"/>
</dbReference>
<dbReference type="RefSeq" id="XP_038967814.1">
    <molecule id="Q01728-3"/>
    <property type="nucleotide sequence ID" value="XM_039111886.2"/>
</dbReference>
<dbReference type="SMR" id="Q01728"/>
<dbReference type="BioGRID" id="248332">
    <property type="interactions" value="45"/>
</dbReference>
<dbReference type="CORUM" id="Q01728"/>
<dbReference type="FunCoup" id="Q01728">
    <property type="interactions" value="1654"/>
</dbReference>
<dbReference type="IntAct" id="Q01728">
    <property type="interactions" value="29"/>
</dbReference>
<dbReference type="MINT" id="Q01728"/>
<dbReference type="STRING" id="10116.ENSRNOP00000040751"/>
<dbReference type="GlyCosmos" id="Q01728">
    <property type="glycosylation" value="2 sites, No reported glycans"/>
</dbReference>
<dbReference type="GlyGen" id="Q01728">
    <property type="glycosylation" value="2 sites"/>
</dbReference>
<dbReference type="iPTMnet" id="Q01728"/>
<dbReference type="PhosphoSitePlus" id="Q01728"/>
<dbReference type="SwissPalm" id="Q01728"/>
<dbReference type="PaxDb" id="10116-ENSRNOP00000040751"/>
<dbReference type="Ensembl" id="ENSRNOT00000046246.6">
    <molecule id="Q01728-6"/>
    <property type="protein sequence ID" value="ENSRNOP00000043539.4"/>
    <property type="gene ID" value="ENSRNOG00000008479.9"/>
</dbReference>
<dbReference type="Ensembl" id="ENSRNOT00000052367.6">
    <molecule id="Q01728-2"/>
    <property type="protein sequence ID" value="ENSRNOP00000050918.4"/>
    <property type="gene ID" value="ENSRNOG00000008479.9"/>
</dbReference>
<dbReference type="GeneID" id="29715"/>
<dbReference type="KEGG" id="rno:29715"/>
<dbReference type="UCSC" id="RGD:3717">
    <molecule id="Q01728-1"/>
    <property type="organism name" value="rat"/>
</dbReference>
<dbReference type="AGR" id="RGD:3717"/>
<dbReference type="CTD" id="6546"/>
<dbReference type="RGD" id="3717">
    <property type="gene designation" value="Slc8a1"/>
</dbReference>
<dbReference type="VEuPathDB" id="HostDB:ENSRNOG00000008479"/>
<dbReference type="eggNOG" id="KOG1306">
    <property type="taxonomic scope" value="Eukaryota"/>
</dbReference>
<dbReference type="GeneTree" id="ENSGT00940000155129"/>
<dbReference type="InParanoid" id="Q01728"/>
<dbReference type="PhylomeDB" id="Q01728"/>
<dbReference type="TreeFam" id="TF314308"/>
<dbReference type="Reactome" id="R-RNO-418359">
    <property type="pathway name" value="Reduction of cytosolic Ca++ levels"/>
</dbReference>
<dbReference type="Reactome" id="R-RNO-425561">
    <property type="pathway name" value="Sodium/Calcium exchangers"/>
</dbReference>
<dbReference type="Reactome" id="R-RNO-5578775">
    <property type="pathway name" value="Ion homeostasis"/>
</dbReference>
<dbReference type="PRO" id="PR:Q01728"/>
<dbReference type="Proteomes" id="UP000002494">
    <property type="component" value="Chromosome 6"/>
</dbReference>
<dbReference type="Bgee" id="ENSRNOG00000008479">
    <property type="expression patterns" value="Expressed in heart and 20 other cell types or tissues"/>
</dbReference>
<dbReference type="ExpressionAtlas" id="Q01728">
    <property type="expression patterns" value="baseline and differential"/>
</dbReference>
<dbReference type="GO" id="GO:0030424">
    <property type="term" value="C:axon"/>
    <property type="evidence" value="ECO:0000314"/>
    <property type="project" value="ARUK-UCL"/>
</dbReference>
<dbReference type="GO" id="GO:0043679">
    <property type="term" value="C:axon terminus"/>
    <property type="evidence" value="ECO:0000266"/>
    <property type="project" value="RGD"/>
</dbReference>
<dbReference type="GO" id="GO:0016323">
    <property type="term" value="C:basolateral plasma membrane"/>
    <property type="evidence" value="ECO:0000266"/>
    <property type="project" value="RGD"/>
</dbReference>
<dbReference type="GO" id="GO:0071944">
    <property type="term" value="C:cell periphery"/>
    <property type="evidence" value="ECO:0000266"/>
    <property type="project" value="RGD"/>
</dbReference>
<dbReference type="GO" id="GO:0042995">
    <property type="term" value="C:cell projection"/>
    <property type="evidence" value="ECO:0000314"/>
    <property type="project" value="RGD"/>
</dbReference>
<dbReference type="GO" id="GO:0030425">
    <property type="term" value="C:dendrite"/>
    <property type="evidence" value="ECO:0000314"/>
    <property type="project" value="ARUK-UCL"/>
</dbReference>
<dbReference type="GO" id="GO:0043198">
    <property type="term" value="C:dendritic shaft"/>
    <property type="evidence" value="ECO:0000314"/>
    <property type="project" value="RGD"/>
</dbReference>
<dbReference type="GO" id="GO:0043197">
    <property type="term" value="C:dendritic spine"/>
    <property type="evidence" value="ECO:0000314"/>
    <property type="project" value="RGD"/>
</dbReference>
<dbReference type="GO" id="GO:0014704">
    <property type="term" value="C:intercalated disc"/>
    <property type="evidence" value="ECO:0000314"/>
    <property type="project" value="BHF-UCL"/>
</dbReference>
<dbReference type="GO" id="GO:0016020">
    <property type="term" value="C:membrane"/>
    <property type="evidence" value="ECO:0000266"/>
    <property type="project" value="RGD"/>
</dbReference>
<dbReference type="GO" id="GO:0005874">
    <property type="term" value="C:microtubule"/>
    <property type="evidence" value="ECO:0000314"/>
    <property type="project" value="RGD"/>
</dbReference>
<dbReference type="GO" id="GO:0043025">
    <property type="term" value="C:neuronal cell body"/>
    <property type="evidence" value="ECO:0000314"/>
    <property type="project" value="ARUK-UCL"/>
</dbReference>
<dbReference type="GO" id="GO:0005886">
    <property type="term" value="C:plasma membrane"/>
    <property type="evidence" value="ECO:0000250"/>
    <property type="project" value="UniProtKB"/>
</dbReference>
<dbReference type="GO" id="GO:0098794">
    <property type="term" value="C:postsynapse"/>
    <property type="evidence" value="ECO:0000318"/>
    <property type="project" value="GO_Central"/>
</dbReference>
<dbReference type="GO" id="GO:0014069">
    <property type="term" value="C:postsynaptic density"/>
    <property type="evidence" value="ECO:0000266"/>
    <property type="project" value="RGD"/>
</dbReference>
<dbReference type="GO" id="GO:0045211">
    <property type="term" value="C:postsynaptic membrane"/>
    <property type="evidence" value="ECO:0000314"/>
    <property type="project" value="SynGO"/>
</dbReference>
<dbReference type="GO" id="GO:0042383">
    <property type="term" value="C:sarcolemma"/>
    <property type="evidence" value="ECO:0000314"/>
    <property type="project" value="BHF-UCL"/>
</dbReference>
<dbReference type="GO" id="GO:0045202">
    <property type="term" value="C:synapse"/>
    <property type="evidence" value="ECO:0000266"/>
    <property type="project" value="RGD"/>
</dbReference>
<dbReference type="GO" id="GO:0030315">
    <property type="term" value="C:T-tubule"/>
    <property type="evidence" value="ECO:0000314"/>
    <property type="project" value="BHF-UCL"/>
</dbReference>
<dbReference type="GO" id="GO:0030018">
    <property type="term" value="C:Z disc"/>
    <property type="evidence" value="ECO:0000314"/>
    <property type="project" value="BHF-UCL"/>
</dbReference>
<dbReference type="GO" id="GO:0030506">
    <property type="term" value="F:ankyrin binding"/>
    <property type="evidence" value="ECO:0000266"/>
    <property type="project" value="RGD"/>
</dbReference>
<dbReference type="GO" id="GO:0005509">
    <property type="term" value="F:calcium ion binding"/>
    <property type="evidence" value="ECO:0000250"/>
    <property type="project" value="UniProtKB"/>
</dbReference>
<dbReference type="GO" id="GO:1905060">
    <property type="term" value="F:calcium:monoatomic cation antiporter activity involved in regulation of postsynaptic cytosolic calcium ion concentration"/>
    <property type="evidence" value="ECO:0000266"/>
    <property type="project" value="RGD"/>
</dbReference>
<dbReference type="GO" id="GO:0005432">
    <property type="term" value="F:calcium:sodium antiporter activity"/>
    <property type="evidence" value="ECO:0000314"/>
    <property type="project" value="BHF-UCL"/>
</dbReference>
<dbReference type="GO" id="GO:0005516">
    <property type="term" value="F:calmodulin binding"/>
    <property type="evidence" value="ECO:0000266"/>
    <property type="project" value="RGD"/>
</dbReference>
<dbReference type="GO" id="GO:0008092">
    <property type="term" value="F:cytoskeletal protein binding"/>
    <property type="evidence" value="ECO:0000266"/>
    <property type="project" value="RGD"/>
</dbReference>
<dbReference type="GO" id="GO:0044325">
    <property type="term" value="F:transmembrane transporter binding"/>
    <property type="evidence" value="ECO:0000266"/>
    <property type="project" value="RGD"/>
</dbReference>
<dbReference type="GO" id="GO:1901660">
    <property type="term" value="P:calcium ion export"/>
    <property type="evidence" value="ECO:0000314"/>
    <property type="project" value="BHF-UCL"/>
</dbReference>
<dbReference type="GO" id="GO:0055074">
    <property type="term" value="P:calcium ion homeostasis"/>
    <property type="evidence" value="ECO:0000266"/>
    <property type="project" value="RGD"/>
</dbReference>
<dbReference type="GO" id="GO:0070509">
    <property type="term" value="P:calcium ion import"/>
    <property type="evidence" value="ECO:0000314"/>
    <property type="project" value="BHF-UCL"/>
</dbReference>
<dbReference type="GO" id="GO:0098703">
    <property type="term" value="P:calcium ion import across plasma membrane"/>
    <property type="evidence" value="ECO:0000318"/>
    <property type="project" value="GO_Central"/>
</dbReference>
<dbReference type="GO" id="GO:0070588">
    <property type="term" value="P:calcium ion transmembrane transport"/>
    <property type="evidence" value="ECO:0000314"/>
    <property type="project" value="RGD"/>
</dbReference>
<dbReference type="GO" id="GO:0006816">
    <property type="term" value="P:calcium ion transport"/>
    <property type="evidence" value="ECO:0000266"/>
    <property type="project" value="RGD"/>
</dbReference>
<dbReference type="GO" id="GO:0060402">
    <property type="term" value="P:calcium ion transport into cytosol"/>
    <property type="evidence" value="ECO:0000314"/>
    <property type="project" value="RGD"/>
</dbReference>
<dbReference type="GO" id="GO:0055013">
    <property type="term" value="P:cardiac muscle cell development"/>
    <property type="evidence" value="ECO:0000266"/>
    <property type="project" value="RGD"/>
</dbReference>
<dbReference type="GO" id="GO:0060048">
    <property type="term" value="P:cardiac muscle contraction"/>
    <property type="evidence" value="ECO:0000266"/>
    <property type="project" value="RGD"/>
</dbReference>
<dbReference type="GO" id="GO:0086064">
    <property type="term" value="P:cell communication by electrical coupling involved in cardiac conduction"/>
    <property type="evidence" value="ECO:0000314"/>
    <property type="project" value="BHF-UCL"/>
</dbReference>
<dbReference type="GO" id="GO:0071313">
    <property type="term" value="P:cellular response to caffeine"/>
    <property type="evidence" value="ECO:0000266"/>
    <property type="project" value="RGD"/>
</dbReference>
<dbReference type="GO" id="GO:0071320">
    <property type="term" value="P:cellular response to cAMP"/>
    <property type="evidence" value="ECO:0000314"/>
    <property type="project" value="RGD"/>
</dbReference>
<dbReference type="GO" id="GO:0071456">
    <property type="term" value="P:cellular response to hypoxia"/>
    <property type="evidence" value="ECO:0000270"/>
    <property type="project" value="RGD"/>
</dbReference>
<dbReference type="GO" id="GO:0034614">
    <property type="term" value="P:cellular response to reactive oxygen species"/>
    <property type="evidence" value="ECO:0000314"/>
    <property type="project" value="BHF-UCL"/>
</dbReference>
<dbReference type="GO" id="GO:0035050">
    <property type="term" value="P:embryonic heart tube development"/>
    <property type="evidence" value="ECO:0000266"/>
    <property type="project" value="RGD"/>
</dbReference>
<dbReference type="GO" id="GO:0001892">
    <property type="term" value="P:embryonic placenta development"/>
    <property type="evidence" value="ECO:0000266"/>
    <property type="project" value="RGD"/>
</dbReference>
<dbReference type="GO" id="GO:0003007">
    <property type="term" value="P:heart morphogenesis"/>
    <property type="evidence" value="ECO:0000266"/>
    <property type="project" value="RGD"/>
</dbReference>
<dbReference type="GO" id="GO:0006874">
    <property type="term" value="P:intracellular calcium ion homeostasis"/>
    <property type="evidence" value="ECO:0000315"/>
    <property type="project" value="RGD"/>
</dbReference>
<dbReference type="GO" id="GO:0006883">
    <property type="term" value="P:intracellular sodium ion homeostasis"/>
    <property type="evidence" value="ECO:0000266"/>
    <property type="project" value="RGD"/>
</dbReference>
<dbReference type="GO" id="GO:0055001">
    <property type="term" value="P:muscle cell development"/>
    <property type="evidence" value="ECO:0000266"/>
    <property type="project" value="RGD"/>
</dbReference>
<dbReference type="GO" id="GO:0051481">
    <property type="term" value="P:negative regulation of cytosolic calcium ion concentration"/>
    <property type="evidence" value="ECO:0000266"/>
    <property type="project" value="RGD"/>
</dbReference>
<dbReference type="GO" id="GO:0030501">
    <property type="term" value="P:positive regulation of bone mineralization"/>
    <property type="evidence" value="ECO:0000266"/>
    <property type="project" value="RGD"/>
</dbReference>
<dbReference type="GO" id="GO:0007204">
    <property type="term" value="P:positive regulation of cytosolic calcium ion concentration"/>
    <property type="evidence" value="ECO:0000315"/>
    <property type="project" value="RGD"/>
</dbReference>
<dbReference type="GO" id="GO:0010763">
    <property type="term" value="P:positive regulation of fibroblast migration"/>
    <property type="evidence" value="ECO:0000315"/>
    <property type="project" value="RGD"/>
</dbReference>
<dbReference type="GO" id="GO:0098735">
    <property type="term" value="P:positive regulation of the force of heart contraction"/>
    <property type="evidence" value="ECO:0000266"/>
    <property type="project" value="RGD"/>
</dbReference>
<dbReference type="GO" id="GO:0009791">
    <property type="term" value="P:post-embryonic development"/>
    <property type="evidence" value="ECO:0000266"/>
    <property type="project" value="RGD"/>
</dbReference>
<dbReference type="GO" id="GO:0051924">
    <property type="term" value="P:regulation of calcium ion transport"/>
    <property type="evidence" value="ECO:0000315"/>
    <property type="project" value="RGD"/>
</dbReference>
<dbReference type="GO" id="GO:0010881">
    <property type="term" value="P:regulation of cardiac muscle contraction by regulation of the release of sequestered calcium ion"/>
    <property type="evidence" value="ECO:0000314"/>
    <property type="project" value="BHF-UCL"/>
</dbReference>
<dbReference type="GO" id="GO:0010468">
    <property type="term" value="P:regulation of gene expression"/>
    <property type="evidence" value="ECO:0000266"/>
    <property type="project" value="RGD"/>
</dbReference>
<dbReference type="GO" id="GO:0002027">
    <property type="term" value="P:regulation of heart rate"/>
    <property type="evidence" value="ECO:0000266"/>
    <property type="project" value="RGD"/>
</dbReference>
<dbReference type="GO" id="GO:0002028">
    <property type="term" value="P:regulation of sodium ion transport"/>
    <property type="evidence" value="ECO:0000315"/>
    <property type="project" value="RGD"/>
</dbReference>
<dbReference type="GO" id="GO:0002026">
    <property type="term" value="P:regulation of the force of heart contraction"/>
    <property type="evidence" value="ECO:0000266"/>
    <property type="project" value="RGD"/>
</dbReference>
<dbReference type="GO" id="GO:0044557">
    <property type="term" value="P:relaxation of smooth muscle"/>
    <property type="evidence" value="ECO:0000266"/>
    <property type="project" value="RGD"/>
</dbReference>
<dbReference type="GO" id="GO:0033198">
    <property type="term" value="P:response to ATP"/>
    <property type="evidence" value="ECO:0000314"/>
    <property type="project" value="RGD"/>
</dbReference>
<dbReference type="GO" id="GO:0009749">
    <property type="term" value="P:response to glucose"/>
    <property type="evidence" value="ECO:0000270"/>
    <property type="project" value="RGD"/>
</dbReference>
<dbReference type="GO" id="GO:0042542">
    <property type="term" value="P:response to hydrogen peroxide"/>
    <property type="evidence" value="ECO:0000270"/>
    <property type="project" value="RGD"/>
</dbReference>
<dbReference type="GO" id="GO:0001666">
    <property type="term" value="P:response to hypoxia"/>
    <property type="evidence" value="ECO:0000314"/>
    <property type="project" value="RGD"/>
</dbReference>
<dbReference type="GO" id="GO:0035902">
    <property type="term" value="P:response to immobilization stress"/>
    <property type="evidence" value="ECO:0000270"/>
    <property type="project" value="RGD"/>
</dbReference>
<dbReference type="GO" id="GO:0035994">
    <property type="term" value="P:response to muscle stretch"/>
    <property type="evidence" value="ECO:0000266"/>
    <property type="project" value="RGD"/>
</dbReference>
<dbReference type="GO" id="GO:0007584">
    <property type="term" value="P:response to nutrient"/>
    <property type="evidence" value="ECO:0000270"/>
    <property type="project" value="RGD"/>
</dbReference>
<dbReference type="GO" id="GO:0009410">
    <property type="term" value="P:response to xenobiotic stimulus"/>
    <property type="evidence" value="ECO:0000270"/>
    <property type="project" value="RGD"/>
</dbReference>
<dbReference type="GO" id="GO:0036376">
    <property type="term" value="P:sodium ion export across plasma membrane"/>
    <property type="evidence" value="ECO:0000314"/>
    <property type="project" value="BHF-UCL"/>
</dbReference>
<dbReference type="GO" id="GO:0098719">
    <property type="term" value="P:sodium ion import across plasma membrane"/>
    <property type="evidence" value="ECO:0000314"/>
    <property type="project" value="BHF-UCL"/>
</dbReference>
<dbReference type="GO" id="GO:0035725">
    <property type="term" value="P:sodium ion transmembrane transport"/>
    <property type="evidence" value="ECO:0000266"/>
    <property type="project" value="RGD"/>
</dbReference>
<dbReference type="GO" id="GO:0006814">
    <property type="term" value="P:sodium ion transport"/>
    <property type="evidence" value="ECO:0000314"/>
    <property type="project" value="RGD"/>
</dbReference>
<dbReference type="GO" id="GO:0021537">
    <property type="term" value="P:telencephalon development"/>
    <property type="evidence" value="ECO:0000270"/>
    <property type="project" value="RGD"/>
</dbReference>
<dbReference type="GO" id="GO:0014829">
    <property type="term" value="P:vascular associated smooth muscle contraction"/>
    <property type="evidence" value="ECO:0000266"/>
    <property type="project" value="RGD"/>
</dbReference>
<dbReference type="FunFam" id="1.20.1420.30:FF:000001">
    <property type="entry name" value="sodium/calcium exchanger 1 isoform X1"/>
    <property type="match status" value="1"/>
</dbReference>
<dbReference type="FunFam" id="1.20.1420.30:FF:000003">
    <property type="entry name" value="sodium/calcium exchanger 1 isoform X1"/>
    <property type="match status" value="1"/>
</dbReference>
<dbReference type="FunFam" id="2.60.40.2030:FF:000001">
    <property type="entry name" value="sodium/calcium exchanger 1 isoform X1"/>
    <property type="match status" value="1"/>
</dbReference>
<dbReference type="Gene3D" id="2.60.40.2030">
    <property type="match status" value="2"/>
</dbReference>
<dbReference type="Gene3D" id="1.20.1420.30">
    <property type="entry name" value="NCX, central ion-binding region"/>
    <property type="match status" value="2"/>
</dbReference>
<dbReference type="InterPro" id="IPR051171">
    <property type="entry name" value="CaCA"/>
</dbReference>
<dbReference type="InterPro" id="IPR038081">
    <property type="entry name" value="CalX-like_sf"/>
</dbReference>
<dbReference type="InterPro" id="IPR003644">
    <property type="entry name" value="Calx_beta"/>
</dbReference>
<dbReference type="InterPro" id="IPR001623">
    <property type="entry name" value="DnaJ_domain"/>
</dbReference>
<dbReference type="InterPro" id="IPR004836">
    <property type="entry name" value="Na_Ca_Ex"/>
</dbReference>
<dbReference type="InterPro" id="IPR032452">
    <property type="entry name" value="Na_Ca_Ex_C-exten"/>
</dbReference>
<dbReference type="InterPro" id="IPR002987">
    <property type="entry name" value="NaCa_exhngr1"/>
</dbReference>
<dbReference type="InterPro" id="IPR004837">
    <property type="entry name" value="NaCa_Exmemb"/>
</dbReference>
<dbReference type="InterPro" id="IPR044880">
    <property type="entry name" value="NCX_ion-bd_dom_sf"/>
</dbReference>
<dbReference type="NCBIfam" id="TIGR00845">
    <property type="entry name" value="caca"/>
    <property type="match status" value="1"/>
</dbReference>
<dbReference type="PANTHER" id="PTHR11878">
    <property type="entry name" value="SODIUM/CALCIUM EXCHANGER"/>
    <property type="match status" value="1"/>
</dbReference>
<dbReference type="PANTHER" id="PTHR11878:SF6">
    <property type="entry name" value="SODIUM_CALCIUM EXCHANGER 1"/>
    <property type="match status" value="1"/>
</dbReference>
<dbReference type="Pfam" id="PF03160">
    <property type="entry name" value="Calx-beta"/>
    <property type="match status" value="1"/>
</dbReference>
<dbReference type="Pfam" id="PF01699">
    <property type="entry name" value="Na_Ca_ex"/>
    <property type="match status" value="2"/>
</dbReference>
<dbReference type="Pfam" id="PF16494">
    <property type="entry name" value="Na_Ca_ex_C"/>
    <property type="match status" value="1"/>
</dbReference>
<dbReference type="PRINTS" id="PR01259">
    <property type="entry name" value="NACAEXCHNGR"/>
</dbReference>
<dbReference type="PRINTS" id="PR01260">
    <property type="entry name" value="NACAEXCHNGR1"/>
</dbReference>
<dbReference type="SMART" id="SM00237">
    <property type="entry name" value="Calx_beta"/>
    <property type="match status" value="2"/>
</dbReference>
<dbReference type="SUPFAM" id="SSF141072">
    <property type="entry name" value="CalX-like"/>
    <property type="match status" value="2"/>
</dbReference>
<sequence>MLRLSLPPNVSMGFRLVTLVALLFTHVDHITADTEAETGGNETTECTGSYYCKKGVILPIWEPQDPSFGDKIARATVYFVAMVYMFLGVSIIADRFMSSIEVITSQEKEITIKKPNGETTKTTVRIWNETVSNLTLMALGSSAPEILLSVIEVCGHNFTAGDLGPSTIVGSAAFNMFIIIALCVYVVPDGETRKIKHLRVFFVTAAWSIFAYTWLYIILSVSSPGVVEVWEGLLTFFFFPICVVFAWVADRRLLFYKYVYKRYRAGKQRGMIIEHEGDRPASKTEIEMDGKVVNSHVDNFLDGALVLEVDERDQDDEEARREMARILKELKQKHPDKEIEQLIELANYQVLSQQQKSRAFYRIQATRLMTGAGNILKRHAADQARKAVSMHEVNMDVVENDPVSKVFFEQGTYQCLENCGTVALTIIRRGGDLTNTVFVDFRTEDGTANAGSDYEFTEGTVIFKPGETQKEIRVGIIDDDIFEEDENFLVHLSNVRVSSEVSEDGILDSNHVSAIACLGSPNTATITIFDDDHAGIFTFEEPVTHVSESIGIMEVKVLRTSGARGNVIIPYKTIEGTARGGGEDFEDTCGELEFQNDEIVKTISVKVIDDEEYEKNKTFFIEIGEPRLVEMSEKKALLLNELGGFTLTEGKKMYGQPVFRKVHARDHPIPSTVISISEEYDDKQPLTSKEEEERRIAEMGRPILGEHTKLEVIIEESYEFKSTVDKLIKKTNLALVVGTNSWREQFIEAITVSAGEDDDDDECGEEKLPSCFDYVMHFLTVFWKVLFAFVPPTEYWNGWACFIVSILMIGLLTAFIGDLASHFGCTIGLKDSVTAVVFVALGTSVPDTFASKVAATQDQYADASIGNVTGSNAVNVFLGIGVAWSIAAIYHAANGEQFKVSPGTLAFSVTLFTIFAFINVGVLLYRRRPEIGGELGGPRTAKLLTSSLFVLLWLLYIFFSSLEAYCHIKGF</sequence>